<comment type="function">
    <molecule>NS1-2</molecule>
    <text evidence="6 13 16">Induces the proliferation of the host smooth ER membranes forming long tubular structures (PubMed:29077760, PubMed:36992520). These remodeled membranes probably form the viral factories that contain the replication complex (PubMed:36992520). May play a role in viral replication by interacting with host VAPA, a vesicle-associated membrane protein that plays a role in SNARE-mediated vesicle fusion. This interaction may target replication complex to intracellular membranes (By similarity).</text>
</comment>
<comment type="function">
    <molecule>NTPase</molecule>
    <text evidence="4 5 13 19">Displays NTPase activity, but no helicase activity (By similarity). Displays RNA chaperone-like activity and destabilizes dsRNA (By similarity). Induces the formation of convoluted membranes derived from the host ER (PubMed:29077760). These remodeled membranes probably form the viral factories that contain the replication complex (PubMed:36992520). Initiates host cell death by targeting the mitochondrial outer membrane, leading to the permeabilization of mitochondria, programmed host cell death and viral egress (By similarity). Externalization of host cardiolipin seems to be involved in the process (By similarity). Probably plays a role in preventing the assembly of host stress granules (By similarity).</text>
</comment>
<comment type="function">
    <molecule>NS4</molecule>
    <text evidence="6 13 19">Probable key protein responsible for the formation of membrane alterations by the virus (PubMed:29077760). Induces the formation of convoluted membranes derived from the host ER (PubMed:29077760). These remodeled membranes probably form the viral factories that contain the replication complex (PubMed:36992520). May play a role in targeting replication complex to intracellular membranes (By similarity).</text>
</comment>
<comment type="function">
    <molecule>Viral genome-linked protein</molecule>
    <text evidence="2 5">Viral genome-linked protein is covalently linked to the 5'-end of the positive-strand, negative-strand genomic RNAs and subgenomic RNA (By similarity). Acts as a genome-linked replication primer (By similarity). May recruit ribosome to viral RNA thereby promoting viral proteins translation (By similarity). Interacts with host translation initiation complex to allow the translation of viral proteins (By similarity). Induces the formation of aggregates of RNA-directed RNA polymerase in the presence of RNA (By similarity). Through its interaction with the viral RNA-directed RNA polymerase, plays a crucial role in enhancing the polymerase activity (By similarity).</text>
</comment>
<comment type="function">
    <molecule>3C-like protease</molecule>
    <text evidence="10">Processes the polyprotein. 3CLpro-RdRp is first released by autocleavage, then all other proteins are cleaved. May cleave polyadenylate-binding protein thereby inhibiting cellular translation (By similarity).</text>
</comment>
<comment type="function">
    <molecule>RNA-directed RNA polymerase</molecule>
    <text evidence="7">Replicates genomic and antigenomic RNA by recognizing replications specific signals. Also transcribes a subgenomic mRNA by initiating RNA synthesis internally on antigenomic RNA. This sgRNA codes for structural proteins. Catalyzes the covalent attachment VPg with viral RNAs (By similarity).</text>
</comment>
<comment type="catalytic activity">
    <molecule>NTPase</molecule>
    <reaction evidence="4">
        <text>a ribonucleoside 5'-triphosphate + H2O = a ribonucleoside 5'-diphosphate + phosphate + H(+)</text>
        <dbReference type="Rhea" id="RHEA:23680"/>
        <dbReference type="ChEBI" id="CHEBI:15377"/>
        <dbReference type="ChEBI" id="CHEBI:15378"/>
        <dbReference type="ChEBI" id="CHEBI:43474"/>
        <dbReference type="ChEBI" id="CHEBI:57930"/>
        <dbReference type="ChEBI" id="CHEBI:61557"/>
        <dbReference type="EC" id="3.6.1.15"/>
    </reaction>
</comment>
<comment type="catalytic activity">
    <molecule>3C-like protease</molecule>
    <reaction evidence="10">
        <text>Endopeptidase with a preference for cleavage when the P1 position is occupied by Glu-|-Xaa and the P1' position is occupied by Gly-|-Yaa.</text>
        <dbReference type="EC" id="3.4.22.66"/>
    </reaction>
</comment>
<comment type="catalytic activity">
    <molecule>RNA-directed RNA polymerase</molecule>
    <reaction evidence="8">
        <text>RNA(n) + a ribonucleoside 5'-triphosphate = RNA(n+1) + diphosphate</text>
        <dbReference type="Rhea" id="RHEA:21248"/>
        <dbReference type="Rhea" id="RHEA-COMP:14527"/>
        <dbReference type="Rhea" id="RHEA-COMP:17342"/>
        <dbReference type="ChEBI" id="CHEBI:33019"/>
        <dbReference type="ChEBI" id="CHEBI:61557"/>
        <dbReference type="ChEBI" id="CHEBI:140395"/>
        <dbReference type="EC" id="2.7.7.48"/>
    </reaction>
</comment>
<comment type="cofactor">
    <molecule>NTPase</molecule>
    <cofactor evidence="4">
        <name>Mg(2+)</name>
        <dbReference type="ChEBI" id="CHEBI:18420"/>
    </cofactor>
</comment>
<comment type="cofactor">
    <molecule>RNA-directed RNA polymerase</molecule>
    <cofactor evidence="5">
        <name>Mg(2+)</name>
        <dbReference type="ChEBI" id="CHEBI:18420"/>
    </cofactor>
    <cofactor evidence="5">
        <name>Mn(2+)</name>
        <dbReference type="ChEBI" id="CHEBI:29035"/>
    </cofactor>
</comment>
<comment type="subunit">
    <molecule>NS1-2</molecule>
    <text evidence="6 14 16">Homodimer (PubMed:36992520). Homooligomer (PubMed:29212938, PubMed:36992520). Interacts with NTPase; this interaction increases the proapoptotic activity of the NTPase and is crucial for the formation of the viral replication complex (PubMed:29212938, PubMed:36992520). Interacts with NS4; this interaction is crucial for the formation of the viral replication complex (PubMed:36992520). Interacts (via N-terminus) with host VAPA (By similarity). Interacts with host MAP1LC3A/LC3; this interaction does not seem to be linked to host autophagy, but rather plays a role in the formation of viral factories (PubMed:36992520).</text>
</comment>
<comment type="subunit">
    <molecule>NTPase</molecule>
    <text evidence="14 16">Homooligomer (PubMed:29212938). Interacts with NS1-2; this interaction increases the proapoptotic activity of the NTPase and is crucial for the formation of the viral replication complex (PubMed:29212938, PubMed:36992520). Interacts with NS4; this interaction increases the proapoptotic activity of the NTPase (PubMed:29212938).</text>
</comment>
<comment type="subunit">
    <molecule>3C-like protease</molecule>
    <text evidence="6">Homodimer (By similarity). Monomer; in solution (By similarity).</text>
</comment>
<comment type="subunit">
    <molecule>NS4</molecule>
    <text evidence="14 16">Interacts with NTPase; this interaction increases the proapoptotic activity of the NTPase (PubMed:29212938). Interacts with NS1-2; this interaction is crucial for the formation of the viral replication complex (PubMed:36992520).</text>
</comment>
<comment type="subunit">
    <molecule>Viral genome-linked protein</molecule>
    <text evidence="5 15">Monomer (By similarity). Interacts with the RNA-directed RNA polymerase; this interaction induces the multimerization of the RdRp and enhances its activity (By similarity). Interacts with host IEF4G1; this interaction plays a role in translation of viral proteins (PubMed:31403400).</text>
</comment>
<comment type="subunit">
    <molecule>RNA-directed RNA polymerase</molecule>
    <text evidence="5">Homohexamer; also forms fibrous hexameric oligomer (By similarity). Interacts with the viral genome-linked protein; this interaction induces the multimerization of the RdRp and enhances its activity (By similarity).</text>
</comment>
<comment type="subcellular location">
    <molecule>NS1-2</molecule>
    <subcellularLocation>
        <location evidence="13 16">Host endoplasmic reticulum membrane</location>
    </subcellularLocation>
</comment>
<comment type="subcellular location">
    <molecule>NS1</molecule>
    <subcellularLocation>
        <location evidence="3">Secreted</location>
    </subcellularLocation>
    <text evidence="3">Secreted through an unconventional CASP3-mediated mechanism.</text>
</comment>
<comment type="subcellular location">
    <molecule>NTPase</molecule>
    <subcellularLocation>
        <location evidence="13">Host endoplasmic reticulum membrane</location>
    </subcellularLocation>
    <subcellularLocation>
        <location evidence="14">Host mitochondrion</location>
    </subcellularLocation>
</comment>
<comment type="subcellular location">
    <molecule>NS4</molecule>
    <subcellularLocation>
        <location evidence="13">Host endoplasmic reticulum membrane</location>
    </subcellularLocation>
    <subcellularLocation>
        <location evidence="5">Host Golgi apparatus membrane</location>
    </subcellularLocation>
</comment>
<comment type="subcellular location">
    <molecule>RNA-directed RNA polymerase</molecule>
    <subcellularLocation>
        <location evidence="5">Host cytoplasm</location>
        <location evidence="5">Host perinuclear region</location>
    </subcellularLocation>
</comment>
<comment type="domain">
    <molecule>NS1-2</molecule>
    <text evidence="16">Contains a disordered region in the N-terminus, a putative hydrolase in the central part, and probably a membrane-targeting domain in the C-terminus.</text>
</comment>
<comment type="domain">
    <molecule>NTPase</molecule>
    <text evidence="5 14">Contains a four-helix bundle domain (4HB) membrane-disruption domain in the N-terminus (By similarity). The N-terminus is involved in vesicle formation and ER localization (PubMed:29212938). Contains a mitochondrial localization signal in the C-terminus (PubMed:29212938). The N-terminus is involved in host cell death and viral egress (PubMed:29212938).</text>
</comment>
<comment type="PTM">
    <molecule>Genome polyprotein</molecule>
    <text evidence="6 10">Specific enzymatic cleavages in vivo yield mature proteins. 3CLpro is first autocatalytically cleaved, then processes the whole polyprotein (By similarity). NS1/2-3 and NS3-4 sites are cleaved rapidly and NS4-5, NS5-6, and NS6-7 sites are processed subsequently and less efficiently (By similarity).</text>
</comment>
<comment type="PTM">
    <molecule>Viral genome-linked protein</molecule>
    <text evidence="12">VPg is uridylylated by the polymerase and is covalently attached to the 5'-end of the polyadenylated genomic and subgenomic RNAs. This uridylylated form acts as a nucleotide-peptide primer for the polymerase.</text>
</comment>
<comment type="PTM">
    <molecule>NS1-2</molecule>
    <text evidence="5">Cleaved by host CASP3/caspase 3 at 18-22 h.p.i (By similarity). The cleavage allows NS1 secretion, which is essential for intestinal infection and resistance to IFN-lambda (By similarity).</text>
</comment>
<feature type="chain" id="PRO_0000341998" description="Genome polyprotein">
    <location>
        <begin position="1"/>
        <end position="1699"/>
    </location>
</feature>
<feature type="chain" id="PRO_0000036914" description="NS1-2">
    <location>
        <begin position="1"/>
        <end position="330"/>
    </location>
</feature>
<feature type="chain" id="PRO_0000460159" description="NS1">
    <location>
        <begin position="1"/>
        <end position="120"/>
    </location>
</feature>
<feature type="chain" id="PRO_0000460160" description="NS2">
    <location>
        <begin position="121"/>
        <end position="330"/>
    </location>
</feature>
<feature type="chain" id="PRO_0000036915" description="NTPase">
    <location>
        <begin position="331"/>
        <end position="696"/>
    </location>
</feature>
<feature type="chain" id="PRO_0000036916" description="NS4">
    <location>
        <begin position="697"/>
        <end position="875"/>
    </location>
</feature>
<feature type="chain" id="PRO_0000036917" description="Viral genome-linked protein">
    <location>
        <begin position="876"/>
        <end position="1008"/>
    </location>
</feature>
<feature type="chain" id="PRO_0000036918" description="3C-like protease">
    <location>
        <begin position="1009"/>
        <end position="1189"/>
    </location>
</feature>
<feature type="chain" id="PRO_0000036919" description="RNA-directed RNA polymerase">
    <location>
        <begin position="1190"/>
        <end position="1699"/>
    </location>
</feature>
<feature type="domain" description="SF3 helicase" evidence="9">
    <location>
        <begin position="465"/>
        <end position="632"/>
    </location>
</feature>
<feature type="domain" description="Peptidase C37" evidence="10">
    <location>
        <begin position="1009"/>
        <end position="1189"/>
    </location>
</feature>
<feature type="domain" description="RdRp catalytic" evidence="8">
    <location>
        <begin position="1425"/>
        <end position="1546"/>
    </location>
</feature>
<feature type="region of interest" description="Interaction with host MAP1LC3A/LC3" evidence="16">
    <location>
        <begin position="1"/>
        <end position="116"/>
    </location>
</feature>
<feature type="region of interest" description="Disordered" evidence="11">
    <location>
        <begin position="1"/>
        <end position="78"/>
    </location>
</feature>
<feature type="region of interest" description="Interaction with NTPase" evidence="16">
    <location>
        <begin position="117"/>
        <end position="330"/>
    </location>
</feature>
<feature type="region of interest" description="Interaction with NS4" evidence="16">
    <location>
        <begin position="233"/>
        <end position="330"/>
    </location>
</feature>
<feature type="region of interest" description="Host ER membrane association" evidence="16">
    <location>
        <begin position="250"/>
        <end position="281"/>
    </location>
</feature>
<feature type="region of interest" description="Host ER membrane association" evidence="16">
    <location>
        <begin position="292"/>
        <end position="330"/>
    </location>
</feature>
<feature type="region of interest" description="Interaction with NS1-2, NS4 and homooligomerization" evidence="14">
    <location>
        <begin position="331"/>
        <end position="509"/>
    </location>
</feature>
<feature type="region of interest" description="Important for mitochondrion targeting" evidence="14">
    <location>
        <begin position="586"/>
        <end position="691"/>
    </location>
</feature>
<feature type="region of interest" description="Functions as endoplasmic reticulum export signal" evidence="6">
    <location>
        <begin position="764"/>
        <end position="770"/>
    </location>
</feature>
<feature type="region of interest" description="Host membrane association" evidence="6">
    <location>
        <begin position="801"/>
        <end position="850"/>
    </location>
</feature>
<feature type="region of interest" description="Disordered" evidence="11">
    <location>
        <begin position="843"/>
        <end position="894"/>
    </location>
</feature>
<feature type="region of interest" description="Acidic" evidence="5">
    <location>
        <begin position="899"/>
        <end position="904"/>
    </location>
</feature>
<feature type="region of interest" description="Interaction with host EIF4G" evidence="15">
    <location>
        <begin position="992"/>
        <end position="1008"/>
    </location>
</feature>
<feature type="compositionally biased region" description="Low complexity" evidence="11">
    <location>
        <begin position="1"/>
        <end position="19"/>
    </location>
</feature>
<feature type="compositionally biased region" description="Pro residues" evidence="11">
    <location>
        <begin position="46"/>
        <end position="74"/>
    </location>
</feature>
<feature type="compositionally biased region" description="Basic and acidic residues" evidence="11">
    <location>
        <begin position="850"/>
        <end position="861"/>
    </location>
</feature>
<feature type="compositionally biased region" description="Basic residues" evidence="11">
    <location>
        <begin position="879"/>
        <end position="890"/>
    </location>
</feature>
<feature type="active site" description="For 3CLpro activity" evidence="10">
    <location>
        <position position="1038"/>
    </location>
</feature>
<feature type="active site" description="For 3CLpro activity" evidence="10">
    <location>
        <position position="1062"/>
    </location>
</feature>
<feature type="active site" description="For 3CLpro activity" evidence="10">
    <location>
        <position position="1147"/>
    </location>
</feature>
<feature type="binding site" evidence="9">
    <location>
        <begin position="495"/>
        <end position="502"/>
    </location>
    <ligand>
        <name>ATP</name>
        <dbReference type="ChEBI" id="CHEBI:30616"/>
    </ligand>
</feature>
<feature type="binding site" evidence="5">
    <location>
        <position position="1429"/>
    </location>
    <ligand>
        <name>Mg(2+)</name>
        <dbReference type="ChEBI" id="CHEBI:18420"/>
        <note>catalytic; for RNA-directed RNA polymerase activity</note>
    </ligand>
</feature>
<feature type="binding site" evidence="5">
    <location>
        <position position="1431"/>
    </location>
    <ligand>
        <name>Mg(2+)</name>
        <dbReference type="ChEBI" id="CHEBI:18420"/>
        <note>catalytic; for RNA-directed RNA polymerase activity</note>
    </ligand>
</feature>
<feature type="binding site" evidence="5">
    <location>
        <position position="1533"/>
    </location>
    <ligand>
        <name>Mg(2+)</name>
        <dbReference type="ChEBI" id="CHEBI:18420"/>
        <note>catalytic; for RNA-directed RNA polymerase activity</note>
    </ligand>
</feature>
<feature type="binding site" evidence="5">
    <location>
        <position position="1534"/>
    </location>
    <ligand>
        <name>Mg(2+)</name>
        <dbReference type="ChEBI" id="CHEBI:18420"/>
        <note>catalytic; for RNA-directed RNA polymerase activity</note>
    </ligand>
</feature>
<feature type="site" description="Cleavage; by host CASP3" evidence="5">
    <location>
        <begin position="120"/>
        <end position="121"/>
    </location>
</feature>
<feature type="site" description="Cleavage; by 3CLpro" evidence="1">
    <location>
        <begin position="330"/>
        <end position="331"/>
    </location>
</feature>
<feature type="site" description="Cleavage; by 3CLpro" evidence="1">
    <location>
        <begin position="696"/>
        <end position="697"/>
    </location>
</feature>
<feature type="site" description="Cleavage; by 3CLpro" evidence="1">
    <location>
        <begin position="875"/>
        <end position="876"/>
    </location>
</feature>
<feature type="site" description="Cleavage; by 3CLpro" evidence="1">
    <location>
        <begin position="1008"/>
        <end position="1009"/>
    </location>
</feature>
<feature type="site" description="Cleavage; by 3CLpro" evidence="1">
    <location>
        <begin position="1189"/>
        <end position="1190"/>
    </location>
</feature>
<feature type="modified residue" description="O-(5'-phospho-RNA)-tyrosine" evidence="5">
    <location>
        <position position="902"/>
    </location>
</feature>
<feature type="mutagenesis site" description="Reduced interaction with host EIF4G1." evidence="15">
    <original>F</original>
    <variation>A</variation>
    <location>
        <position position="1007"/>
    </location>
</feature>
<dbReference type="EC" id="3.6.1.15" evidence="4"/>
<dbReference type="EC" id="3.4.22.66" evidence="6"/>
<dbReference type="EC" id="2.7.7.48" evidence="5"/>
<dbReference type="EMBL" id="X86557">
    <property type="protein sequence ID" value="CAA60254.1"/>
    <property type="molecule type" value="Genomic_RNA"/>
</dbReference>
<dbReference type="SMR" id="P54634"/>
<dbReference type="IntAct" id="P54634">
    <property type="interactions" value="2"/>
</dbReference>
<dbReference type="MEROPS" id="C37.001"/>
<dbReference type="Proteomes" id="UP000007767">
    <property type="component" value="Genome"/>
</dbReference>
<dbReference type="GO" id="GO:0005576">
    <property type="term" value="C:extracellular region"/>
    <property type="evidence" value="ECO:0007669"/>
    <property type="project" value="UniProtKB-SubCell"/>
</dbReference>
<dbReference type="GO" id="GO:0044167">
    <property type="term" value="C:host cell endoplasmic reticulum membrane"/>
    <property type="evidence" value="ECO:0007669"/>
    <property type="project" value="UniProtKB-SubCell"/>
</dbReference>
<dbReference type="GO" id="GO:0044178">
    <property type="term" value="C:host cell Golgi membrane"/>
    <property type="evidence" value="ECO:0007669"/>
    <property type="project" value="UniProtKB-SubCell"/>
</dbReference>
<dbReference type="GO" id="GO:0033650">
    <property type="term" value="C:host cell mitochondrion"/>
    <property type="evidence" value="ECO:0007669"/>
    <property type="project" value="UniProtKB-SubCell"/>
</dbReference>
<dbReference type="GO" id="GO:0044220">
    <property type="term" value="C:host cell perinuclear region of cytoplasm"/>
    <property type="evidence" value="ECO:0007669"/>
    <property type="project" value="UniProtKB-SubCell"/>
</dbReference>
<dbReference type="GO" id="GO:0016020">
    <property type="term" value="C:membrane"/>
    <property type="evidence" value="ECO:0007669"/>
    <property type="project" value="UniProtKB-KW"/>
</dbReference>
<dbReference type="GO" id="GO:0005524">
    <property type="term" value="F:ATP binding"/>
    <property type="evidence" value="ECO:0007669"/>
    <property type="project" value="UniProtKB-KW"/>
</dbReference>
<dbReference type="GO" id="GO:0016887">
    <property type="term" value="F:ATP hydrolysis activity"/>
    <property type="evidence" value="ECO:0007669"/>
    <property type="project" value="InterPro"/>
</dbReference>
<dbReference type="GO" id="GO:0004197">
    <property type="term" value="F:cysteine-type endopeptidase activity"/>
    <property type="evidence" value="ECO:0007669"/>
    <property type="project" value="InterPro"/>
</dbReference>
<dbReference type="GO" id="GO:0046872">
    <property type="term" value="F:metal ion binding"/>
    <property type="evidence" value="ECO:0007669"/>
    <property type="project" value="UniProtKB-KW"/>
</dbReference>
<dbReference type="GO" id="GO:0003723">
    <property type="term" value="F:RNA binding"/>
    <property type="evidence" value="ECO:0007669"/>
    <property type="project" value="InterPro"/>
</dbReference>
<dbReference type="GO" id="GO:0003724">
    <property type="term" value="F:RNA helicase activity"/>
    <property type="evidence" value="ECO:0007669"/>
    <property type="project" value="InterPro"/>
</dbReference>
<dbReference type="GO" id="GO:0003968">
    <property type="term" value="F:RNA-directed RNA polymerase activity"/>
    <property type="evidence" value="ECO:0007669"/>
    <property type="project" value="UniProtKB-KW"/>
</dbReference>
<dbReference type="GO" id="GO:0006351">
    <property type="term" value="P:DNA-templated transcription"/>
    <property type="evidence" value="ECO:0007669"/>
    <property type="project" value="InterPro"/>
</dbReference>
<dbReference type="GO" id="GO:0006508">
    <property type="term" value="P:proteolysis"/>
    <property type="evidence" value="ECO:0007669"/>
    <property type="project" value="UniProtKB-KW"/>
</dbReference>
<dbReference type="GO" id="GO:0039694">
    <property type="term" value="P:viral RNA genome replication"/>
    <property type="evidence" value="ECO:0007669"/>
    <property type="project" value="InterPro"/>
</dbReference>
<dbReference type="CDD" id="cd23192">
    <property type="entry name" value="Caliciviridae_RdRp"/>
    <property type="match status" value="1"/>
</dbReference>
<dbReference type="Gene3D" id="1.20.960.20">
    <property type="match status" value="1"/>
</dbReference>
<dbReference type="Gene3D" id="3.30.70.270">
    <property type="match status" value="2"/>
</dbReference>
<dbReference type="Gene3D" id="6.10.20.70">
    <property type="match status" value="1"/>
</dbReference>
<dbReference type="Gene3D" id="6.10.250.3230">
    <property type="match status" value="1"/>
</dbReference>
<dbReference type="Gene3D" id="3.40.50.300">
    <property type="entry name" value="P-loop containing nucleotide triphosphate hydrolases"/>
    <property type="match status" value="1"/>
</dbReference>
<dbReference type="Gene3D" id="2.40.10.10">
    <property type="entry name" value="Trypsin-like serine proteases"/>
    <property type="match status" value="2"/>
</dbReference>
<dbReference type="InterPro" id="IPR003593">
    <property type="entry name" value="AAA+_ATPase"/>
</dbReference>
<dbReference type="InterPro" id="IPR043502">
    <property type="entry name" value="DNA/RNA_pol_sf"/>
</dbReference>
<dbReference type="InterPro" id="IPR000605">
    <property type="entry name" value="Helicase_SF3_ssDNA/RNA_vir"/>
</dbReference>
<dbReference type="InterPro" id="IPR014759">
    <property type="entry name" value="Helicase_SF3_ssRNA_vir"/>
</dbReference>
<dbReference type="InterPro" id="IPR001665">
    <property type="entry name" value="Norovirus_pept_C37"/>
</dbReference>
<dbReference type="InterPro" id="IPR027417">
    <property type="entry name" value="P-loop_NTPase"/>
</dbReference>
<dbReference type="InterPro" id="IPR009003">
    <property type="entry name" value="Peptidase_S1_PA"/>
</dbReference>
<dbReference type="InterPro" id="IPR043504">
    <property type="entry name" value="Peptidase_S1_PA_chymotrypsin"/>
</dbReference>
<dbReference type="InterPro" id="IPR043128">
    <property type="entry name" value="Rev_trsase/Diguanyl_cyclase"/>
</dbReference>
<dbReference type="InterPro" id="IPR001205">
    <property type="entry name" value="RNA-dir_pol_C"/>
</dbReference>
<dbReference type="InterPro" id="IPR007094">
    <property type="entry name" value="RNA-dir_pol_PSvirus"/>
</dbReference>
<dbReference type="InterPro" id="IPR013614">
    <property type="entry name" value="Viral_PP_Calicivir_N"/>
</dbReference>
<dbReference type="Pfam" id="PF08405">
    <property type="entry name" value="Calici_PP_N"/>
    <property type="match status" value="1"/>
</dbReference>
<dbReference type="Pfam" id="PF05416">
    <property type="entry name" value="Peptidase_C37"/>
    <property type="match status" value="1"/>
</dbReference>
<dbReference type="Pfam" id="PF00680">
    <property type="entry name" value="RdRP_1"/>
    <property type="match status" value="1"/>
</dbReference>
<dbReference type="Pfam" id="PF00910">
    <property type="entry name" value="RNA_helicase"/>
    <property type="match status" value="1"/>
</dbReference>
<dbReference type="PRINTS" id="PR00917">
    <property type="entry name" value="SRSVCYSPTASE"/>
</dbReference>
<dbReference type="SMART" id="SM00382">
    <property type="entry name" value="AAA"/>
    <property type="match status" value="1"/>
</dbReference>
<dbReference type="SUPFAM" id="SSF56672">
    <property type="entry name" value="DNA/RNA polymerases"/>
    <property type="match status" value="1"/>
</dbReference>
<dbReference type="SUPFAM" id="SSF52540">
    <property type="entry name" value="P-loop containing nucleoside triphosphate hydrolases"/>
    <property type="match status" value="1"/>
</dbReference>
<dbReference type="SUPFAM" id="SSF50494">
    <property type="entry name" value="Trypsin-like serine proteases"/>
    <property type="match status" value="1"/>
</dbReference>
<dbReference type="PROSITE" id="PS51537">
    <property type="entry name" value="NV_3CL_PRO"/>
    <property type="match status" value="1"/>
</dbReference>
<dbReference type="PROSITE" id="PS50507">
    <property type="entry name" value="RDRP_SSRNA_POS"/>
    <property type="match status" value="1"/>
</dbReference>
<dbReference type="PROSITE" id="PS51218">
    <property type="entry name" value="SF3_HELICASE_2"/>
    <property type="match status" value="1"/>
</dbReference>
<evidence type="ECO:0000250" key="1"/>
<evidence type="ECO:0000250" key="2">
    <source>
        <dbReference type="UniProtKB" id="P27409"/>
    </source>
</evidence>
<evidence type="ECO:0000250" key="3">
    <source>
        <dbReference type="UniProtKB" id="P63073"/>
    </source>
</evidence>
<evidence type="ECO:0000250" key="4">
    <source>
        <dbReference type="UniProtKB" id="Q04544"/>
    </source>
</evidence>
<evidence type="ECO:0000250" key="5">
    <source>
        <dbReference type="UniProtKB" id="Q80J95"/>
    </source>
</evidence>
<evidence type="ECO:0000250" key="6">
    <source>
        <dbReference type="UniProtKB" id="Q83883"/>
    </source>
</evidence>
<evidence type="ECO:0000250" key="7">
    <source>
        <dbReference type="UniProtKB" id="Q86119"/>
    </source>
</evidence>
<evidence type="ECO:0000255" key="8">
    <source>
        <dbReference type="PROSITE-ProRule" id="PRU00539"/>
    </source>
</evidence>
<evidence type="ECO:0000255" key="9">
    <source>
        <dbReference type="PROSITE-ProRule" id="PRU00551"/>
    </source>
</evidence>
<evidence type="ECO:0000255" key="10">
    <source>
        <dbReference type="PROSITE-ProRule" id="PRU00870"/>
    </source>
</evidence>
<evidence type="ECO:0000256" key="11">
    <source>
        <dbReference type="SAM" id="MobiDB-lite"/>
    </source>
</evidence>
<evidence type="ECO:0000269" key="12">
    <source>
    </source>
</evidence>
<evidence type="ECO:0000269" key="13">
    <source>
    </source>
</evidence>
<evidence type="ECO:0000269" key="14">
    <source>
    </source>
</evidence>
<evidence type="ECO:0000269" key="15">
    <source>
    </source>
</evidence>
<evidence type="ECO:0000269" key="16">
    <source>
    </source>
</evidence>
<evidence type="ECO:0000303" key="17">
    <source>
    </source>
</evidence>
<evidence type="ECO:0000303" key="18">
    <source>
    </source>
</evidence>
<evidence type="ECO:0000303" key="19">
    <source>
    </source>
</evidence>
<evidence type="ECO:0000305" key="20"/>
<reference key="1">
    <citation type="journal article" date="1995" name="J. Gen. Virol.">
        <title>Human enteric Caliciviridae: the complete genome sequence and expression of virus-like particles from a genetic group II small round structured virus.</title>
        <authorList>
            <person name="Dingle K.E."/>
            <person name="Lambden P.R."/>
            <person name="Caul E.O."/>
            <person name="Clarke I.N."/>
        </authorList>
    </citation>
    <scope>NUCLEOTIDE SEQUENCE [GENOMIC RNA]</scope>
</reference>
<reference key="2">
    <citation type="journal article" date="2008" name="Virology">
        <title>Nucleotidylylation of the VPg protein of a human norovirus by its proteinase-polymerase precursor protein.</title>
        <authorList>
            <person name="Belliot G."/>
            <person name="Sosnovtsev S.V."/>
            <person name="Chang K.O."/>
            <person name="McPhie P."/>
            <person name="Green K.Y."/>
        </authorList>
    </citation>
    <scope>URIDYLYLATION (VIRAL GENOME-LINKED PROTEIN)</scope>
    <source>
        <strain>MD145</strain>
    </source>
</reference>
<reference key="3">
    <citation type="journal article" date="2017" name="PLoS Pathog.">
        <title>Membrane alterations induced by nonstructural proteins of human norovirus.</title>
        <authorList>
            <person name="Doerflinger S.Y."/>
            <person name="Cortese M."/>
            <person name="Romero-Brey I."/>
            <person name="Menne Z."/>
            <person name="Tubiana T."/>
            <person name="Schenk C."/>
            <person name="White P.A."/>
            <person name="Bartenschlager R."/>
            <person name="Bressanelli S."/>
            <person name="Hansman G.S."/>
            <person name="Lohmann V."/>
        </authorList>
    </citation>
    <scope>FUNCTION (NS1-2)</scope>
    <scope>FUNCTION (NTPASE)</scope>
    <scope>SUBCELLULAR LOCATION (NTPASE)</scope>
    <scope>SUBCELLULAR LOCATION (NS1-2)</scope>
    <scope>FUNCTION (NS4)</scope>
    <scope>SUBCELLULAR LOCATION (NS4)</scope>
    <source>
        <strain>Hu/NoV/Australia/NSW0514/2012/GII.4</strain>
    </source>
</reference>
<reference key="4">
    <citation type="journal article" date="2018" name="J. Virol.">
        <title>Subcellular Localization and Functional Characterization of GII.4 Norovirus-Encoded NTPase.</title>
        <authorList>
            <person name="Yen J.B."/>
            <person name="Wei L.H."/>
            <person name="Chen L.W."/>
            <person name="Chen L.Y."/>
            <person name="Hung C.H."/>
            <person name="Wang S.S."/>
            <person name="Chang P.J."/>
        </authorList>
    </citation>
    <scope>SUBCELLULAR LOCATION (NTPASE)</scope>
    <scope>DOMAIN (NTPASE)</scope>
    <scope>SUBUNIT (NTPASE)</scope>
    <scope>INTERACTION WITH NS1-2 (NTPASE)</scope>
    <scope>INTERACTION WITH NS4 (NTPASE)</scope>
    <scope>INTERACTION WITH NTPASE (NS4)</scope>
    <scope>INTERACTION WITH NTPASE (NS1-2)</scope>
    <scope>SUBUNIT (NS1-2)</scope>
    <source>
        <strain>Hu/NoV/YJB1/Taiwan/2009/GII.4</strain>
    </source>
</reference>
<reference key="5">
    <citation type="journal article" date="2019" name="Elife">
        <title>Noroviruses subvert the core stress granule component G3BP1 to promote viral VPg-dependent translation.</title>
        <authorList>
            <person name="Hosmillo M."/>
            <person name="Lu J."/>
            <person name="McAllaster M.R."/>
            <person name="Eaglesham J.B."/>
            <person name="Wang X."/>
            <person name="Emmott E."/>
            <person name="Domingues P."/>
            <person name="Chaudhry Y."/>
            <person name="Fitzmaurice T.J."/>
            <person name="Tung M.K."/>
            <person name="Panas M.D."/>
            <person name="McInerney G."/>
            <person name="Locker N."/>
            <person name="Wilen C.B."/>
            <person name="Goodfellow I.G."/>
        </authorList>
    </citation>
    <scope>MUTAGENESIS OF PHE-1007</scope>
    <scope>INTERACTION WITH HOST EIF4G1 (VIRAL GENOME-LINKED PROTEIN)</scope>
</reference>
<reference key="6">
    <citation type="journal article" date="2021" name="Front. Microbiol.">
        <title>Calicivirus Non-structural Proteins: Potential Functions in Replication and Host Cell Manipulation.</title>
        <authorList>
            <person name="Smertina E."/>
            <person name="Hall R.N."/>
            <person name="Urakova N."/>
            <person name="Strive T."/>
            <person name="Frese M."/>
        </authorList>
    </citation>
    <scope>REVIEW</scope>
</reference>
<reference key="7">
    <citation type="journal article" date="2023" name="Viruses">
        <title>Characterization of Human Norovirus Nonstructural Protein NS1.2 Involved in the Induction of the Filamentous Endoplasmic Reticulum, Enlarged Lipid Droplets, LC3 Recruitment, and Interaction with NTPase and NS4.</title>
        <authorList>
            <person name="Hung C.H."/>
            <person name="Yen J.B."/>
            <person name="Chang P.J."/>
            <person name="Chen L.W."/>
            <person name="Huang T.Y."/>
            <person name="Tsai W.J."/>
            <person name="Tsai Y.C."/>
        </authorList>
    </citation>
    <scope>FUNCTION (NS1-2)</scope>
    <scope>DOMAIN (NS1-2)</scope>
    <scope>INTERACTION WITH NS4 (NS1-2)</scope>
    <scope>INTERACTION WITH NTPASE (NS1-2)</scope>
    <scope>INTERACTION WITH NS1-2 (NTPASE)</scope>
    <scope>INTERACTION WITH NS1-2 (NS4)</scope>
    <scope>SUBCELLULAR LOCATION (NS1-2)</scope>
    <scope>INTERACTION WITH HOST MAP1LC3A/LC3 (NS1-2)</scope>
    <source>
        <strain>Hu/NoV/YJB1/Taiwan/2009/GII.4</strain>
    </source>
</reference>
<gene>
    <name type="ORF">ORF1</name>
</gene>
<proteinExistence type="evidence at protein level"/>
<sequence length="1699" mass="189201">MKMASNDASAAAVVNSNNDTAKSSSDGVLSSMAVTFKRALGGRAKQPPPRETPQRPPRPPTPELVKKIPPPPPNGEDELVVSYSVKDGVSGLPELSTVRQPDEANTAFSVPPLNQRENRDAKEPLTGTILEMWDGEIYHYGLYVERGLVLGVHKPPAAISLAKVELTPLSLFWRPVYTPQYLISPDTLKRLHGESFPYTAFDNNCYAFCCWVLDLNDSWLSRRMIQRTTGFFRPYQDWNRKPLPTMDDSKLKKVANVFLCALSSLFTRPIKDIIGKLRPLNILNILASCDWTFAGIVESLILLAELFGVFWTPPDVSAMIAPLLGDYELQGPEDLAVELVPIVMGGIGLVLGFTKEKIGKMLSSAASTLRACKDLGAYGLEILKLVMKWFFPKKEEANELAMVRSIEDAVLDLEAIENNHMTTLLKDKDSLATYMRTLDLEEEKARKLSTKSASPDIVGTINALLARIAAARSLVHRAKEELSSRLRPVVVMISGKPGIGKTHLARELAKRIAASLTGDQRVGLIPRNGVDHWDAYKGERVVLWDDYGMSNPIHDALRLQELADTCPLTLNCDRIENKGKVFDSDAIIITTNLANPAPLDYVNFEACSRRIDFLVYAEAPEVEKAKRDFPGQPDMWKNAFSPDFSHIKLALAPQGGFDKNGNTPHGKGVMKTLTTGSLIARASGLLHERLDEYELQGPALTTFNFDRNKVLAFRQLAAENKYGLMDTMKVGRQLKDVRTMPELKQALKNISIKRCQIVYSGCTYTLESDGKGNVKVDRVQSATVQTNHELAGALHHLRCARIRYYVKCVQEALYSIIQIAGAAFVTTRIVKRMNIQDLWSKPQVEDTEDTANKDGCPKPKDDEEFVVSSDDIKTEGKKGKNKTGRGKKHTAFSSKGLSDEEYDEYKRIREERNGKYSIEEYLQDRDKYYEEVAIARATEEDFCEEEEAKIRQRIFRPTRKQRKEERASLGLVTGSEIRKRNPDDFKPKGKLWADDDRSVDYNEKLDFEAPPSIWSRIVNFGSGWGFWVSPSLFITSTHVIPQGAQEFFGVPVKQIQIHKSGEFCRLRFPKPIRTDVTGMILEEGAPEGTVVTLLIKRSTGELMPLAARMGTHATMKIQGRTVGGQMGMLLTGSNAKSMDLGTTPGDCGCPYIYKRENDYVVIGVHTAAARGGNTVICATQGSEGEATLEGGDNKGTYCGAPILGPGSAPKLSTKTKFWRSSTAPLPPGTYEPAYLGGKDPRVKGGPSLQQVMRDQLKPFTEPRGKPPKPSVLEAAKRTIINVLEQTIDPPQKWSFTQACASLDKTTSSGHPHHMRKNDCWNGESFTGKLADQASKANLMFEEGKNMTPVYTGALKDELVKTDKIYGKIKKRLLWGSDLATMIRCARAFGGLMDELKAHCVTLPIRVGMNMNEDGPIIFERHSRYKYHYDADYSRWDSTQQRAVLAAALEIMVKFSPEPHLAQIVAEDLLSPSVMDVGDFKISINEGLPSGVPCTSQWNSIAHWLLTLCALSEVTNLSPDIIQANSLFSFYGDDEIVSTDINLNPEKLTAKLKEYGLKPTRPDKTEGPLIISEDLNGLTFLRRTVTRDPAGWFGKLDQSSILRQMYWTRGPNHEDPSETMIPHSQRPIQLMSLLGEAALHGPAFYSKISKLVIAELKEGGMDFYVPRQEPMFRWMRFSDLSTWEGDRNLAPSFVNEDGVE</sequence>
<organism>
    <name type="scientific">Lordsdale virus (strain GII/Human/United Kingdom/Lordsdale/1993)</name>
    <name type="common">Human enteric calicivirus</name>
    <name type="synonym">Hu/NV/LD/1993/UK</name>
    <dbReference type="NCBI Taxonomy" id="82658"/>
    <lineage>
        <taxon>Viruses</taxon>
        <taxon>Riboviria</taxon>
        <taxon>Orthornavirae</taxon>
        <taxon>Pisuviricota</taxon>
        <taxon>Pisoniviricetes</taxon>
        <taxon>Picornavirales</taxon>
        <taxon>Caliciviridae</taxon>
        <taxon>Norovirus</taxon>
        <taxon>Norwalk virus</taxon>
    </lineage>
</organism>
<protein>
    <recommendedName>
        <fullName>Genome polyprotein</fullName>
    </recommendedName>
    <component>
        <recommendedName>
            <fullName evidence="17">NS1-2</fullName>
        </recommendedName>
        <alternativeName>
            <fullName evidence="20">NS1.2</fullName>
        </alternativeName>
        <alternativeName>
            <fullName evidence="20">NS1/2</fullName>
        </alternativeName>
        <alternativeName>
            <fullName evidence="18">Nterm</fullName>
        </alternativeName>
        <alternativeName>
            <fullName evidence="20">Protein p37</fullName>
        </alternativeName>
    </component>
    <component>
        <recommendedName>
            <fullName>NS1</fullName>
        </recommendedName>
    </component>
    <component>
        <recommendedName>
            <fullName>NS2</fullName>
        </recommendedName>
    </component>
    <component>
        <recommendedName>
            <fullName>NTPase</fullName>
            <ecNumber evidence="4">3.6.1.15</ecNumber>
        </recommendedName>
        <alternativeName>
            <fullName evidence="20">NS3</fullName>
        </alternativeName>
        <alternativeName>
            <fullName>p40</fullName>
        </alternativeName>
    </component>
    <component>
        <recommendedName>
            <fullName evidence="20">NS4</fullName>
        </recommendedName>
        <alternativeName>
            <fullName>Protein p22</fullName>
        </alternativeName>
    </component>
    <component>
        <recommendedName>
            <fullName>Viral genome-linked protein</fullName>
            <shortName>VPg</shortName>
        </recommendedName>
        <alternativeName>
            <fullName evidence="20">NS5</fullName>
        </alternativeName>
    </component>
    <component>
        <recommendedName>
            <fullName>3C-like protease</fullName>
            <shortName>3CLpro</shortName>
            <ecNumber evidence="6">3.4.22.66</ecNumber>
        </recommendedName>
        <alternativeName>
            <fullName>Calicivirin</fullName>
        </alternativeName>
        <alternativeName>
            <fullName evidence="20">NS6</fullName>
        </alternativeName>
    </component>
    <component>
        <recommendedName>
            <fullName>RNA-directed RNA polymerase</fullName>
            <shortName>RdRp</shortName>
            <ecNumber evidence="5">2.7.7.48</ecNumber>
        </recommendedName>
        <alternativeName>
            <fullName evidence="20">NS7</fullName>
        </alternativeName>
    </component>
</protein>
<organismHost>
    <name type="scientific">Homo sapiens</name>
    <name type="common">Human</name>
    <dbReference type="NCBI Taxonomy" id="9606"/>
</organismHost>
<name>POLG_LORDV</name>
<accession>P54634</accession>
<keyword id="KW-0067">ATP-binding</keyword>
<keyword id="KW-0191">Covalent protein-RNA linkage</keyword>
<keyword id="KW-1035">Host cytoplasm</keyword>
<keyword id="KW-1038">Host endoplasmic reticulum</keyword>
<keyword id="KW-1040">Host Golgi apparatus</keyword>
<keyword id="KW-1043">Host membrane</keyword>
<keyword id="KW-1045">Host mitochondrion</keyword>
<keyword id="KW-0945">Host-virus interaction</keyword>
<keyword id="KW-0378">Hydrolase</keyword>
<keyword id="KW-0460">Magnesium</keyword>
<keyword id="KW-0472">Membrane</keyword>
<keyword id="KW-0479">Metal-binding</keyword>
<keyword id="KW-0547">Nucleotide-binding</keyword>
<keyword id="KW-0548">Nucleotidyltransferase</keyword>
<keyword id="KW-0597">Phosphoprotein</keyword>
<keyword id="KW-0645">Protease</keyword>
<keyword id="KW-0696">RNA-directed RNA polymerase</keyword>
<keyword id="KW-0964">Secreted</keyword>
<keyword id="KW-0788">Thiol protease</keyword>
<keyword id="KW-0808">Transferase</keyword>
<keyword id="KW-0693">Viral RNA replication</keyword>